<feature type="chain" id="PRO_0000334599" description="Metacaspase-1">
    <location>
        <begin position="1"/>
        <end position="367"/>
    </location>
</feature>
<feature type="region of interest" description="Disordered" evidence="2">
    <location>
        <begin position="47"/>
        <end position="77"/>
    </location>
</feature>
<feature type="compositionally biased region" description="Pro residues" evidence="2">
    <location>
        <begin position="50"/>
        <end position="73"/>
    </location>
</feature>
<feature type="active site" evidence="1">
    <location>
        <position position="164"/>
    </location>
</feature>
<feature type="active site">
    <location>
        <position position="220"/>
    </location>
</feature>
<feature type="mutagenesis site" description="Loss of autoprocessing and cell death regulatory function." evidence="3 4">
    <original>C</original>
    <variation>A</variation>
    <location>
        <position position="220"/>
    </location>
</feature>
<evidence type="ECO:0000250" key="1"/>
<evidence type="ECO:0000256" key="2">
    <source>
        <dbReference type="SAM" id="MobiDB-lite"/>
    </source>
</evidence>
<evidence type="ECO:0000269" key="3">
    <source>
    </source>
</evidence>
<evidence type="ECO:0000269" key="4">
    <source>
    </source>
</evidence>
<evidence type="ECO:0000305" key="5"/>
<accession>Q7XJE6</accession>
<accession>O81911</accession>
<comment type="function">
    <text evidence="3 4">Cysteine protease that cleaves specifically after arginine or lysine residues. Does not cleave caspase-specific substrates. Acts as a positive regulator of cell death. Required for both oxidative stress cell death response and hypersensitive cell death response mediated by immune response.</text>
</comment>
<comment type="subunit">
    <text evidence="4">Interacts (via N-terminus) with LSD1.</text>
</comment>
<comment type="interaction">
    <interactant intactId="EBI-5849501">
        <id>Q7XJE6</id>
    </interactant>
    <interactant intactId="EBI-5849461">
        <id>P94077</id>
        <label>LSD1</label>
    </interactant>
    <organismsDiffer>false</organismsDiffer>
    <experiments>3</experiments>
</comment>
<comment type="PTM">
    <text>Proteolytically processed; by an autocatalytic mechanism.</text>
</comment>
<comment type="disruption phenotype">
    <text evidence="4">No visible phenotype under normal growth conditions, but suppression of hypersensitive cell death response upon infection with avirulent pathogen.</text>
</comment>
<comment type="similarity">
    <text evidence="5">Belongs to the peptidase C14B family.</text>
</comment>
<comment type="sequence caution" evidence="5">
    <conflict type="erroneous gene model prediction">
        <sequence resource="EMBL-CDS" id="AAC24380"/>
    </conflict>
</comment>
<dbReference type="EC" id="3.4.22.-"/>
<dbReference type="EMBL" id="AY219826">
    <property type="protein sequence ID" value="AAP44514.1"/>
    <property type="molecule type" value="mRNA"/>
</dbReference>
<dbReference type="EMBL" id="AY322525">
    <property type="protein sequence ID" value="AAP84706.1"/>
    <property type="molecule type" value="mRNA"/>
</dbReference>
<dbReference type="EMBL" id="U89959">
    <property type="protein sequence ID" value="AAC24380.1"/>
    <property type="status" value="ALT_SEQ"/>
    <property type="molecule type" value="Genomic_DNA"/>
</dbReference>
<dbReference type="EMBL" id="CP002684">
    <property type="protein sequence ID" value="AEE27396.1"/>
    <property type="molecule type" value="Genomic_DNA"/>
</dbReference>
<dbReference type="SMR" id="Q7XJE6"/>
<dbReference type="BioGRID" id="24796">
    <property type="interactions" value="12"/>
</dbReference>
<dbReference type="FunCoup" id="Q7XJE6">
    <property type="interactions" value="932"/>
</dbReference>
<dbReference type="IntAct" id="Q7XJE6">
    <property type="interactions" value="13"/>
</dbReference>
<dbReference type="STRING" id="3702.Q7XJE6"/>
<dbReference type="MEROPS" id="C14.047"/>
<dbReference type="iPTMnet" id="Q7XJE6"/>
<dbReference type="MetOSite" id="Q7XJE6"/>
<dbReference type="PaxDb" id="3702-AT1G02170.1"/>
<dbReference type="ProteomicsDB" id="238821"/>
<dbReference type="EnsemblPlants" id="AT1G02170.1">
    <property type="protein sequence ID" value="AT1G02170.1"/>
    <property type="gene ID" value="AT1G02170"/>
</dbReference>
<dbReference type="GeneID" id="839561"/>
<dbReference type="Gramene" id="AT1G02170.1">
    <property type="protein sequence ID" value="AT1G02170.1"/>
    <property type="gene ID" value="AT1G02170"/>
</dbReference>
<dbReference type="KEGG" id="ath:AT1G02170"/>
<dbReference type="Araport" id="AT1G02170"/>
<dbReference type="TAIR" id="AT1G02170">
    <property type="gene designation" value="MC1"/>
</dbReference>
<dbReference type="eggNOG" id="KOG1546">
    <property type="taxonomic scope" value="Eukaryota"/>
</dbReference>
<dbReference type="HOGENOM" id="CLU_029389_2_4_1"/>
<dbReference type="InParanoid" id="Q7XJE6"/>
<dbReference type="OMA" id="MHRIMVT"/>
<dbReference type="PhylomeDB" id="Q7XJE6"/>
<dbReference type="PRO" id="PR:Q7XJE6"/>
<dbReference type="Proteomes" id="UP000006548">
    <property type="component" value="Chromosome 1"/>
</dbReference>
<dbReference type="ExpressionAtlas" id="Q7XJE6">
    <property type="expression patterns" value="baseline and differential"/>
</dbReference>
<dbReference type="GO" id="GO:0004197">
    <property type="term" value="F:cysteine-type endopeptidase activity"/>
    <property type="evidence" value="ECO:0000314"/>
    <property type="project" value="TAIR"/>
</dbReference>
<dbReference type="GO" id="GO:0006952">
    <property type="term" value="P:defense response"/>
    <property type="evidence" value="ECO:0007669"/>
    <property type="project" value="UniProtKB-KW"/>
</dbReference>
<dbReference type="GO" id="GO:0043068">
    <property type="term" value="P:positive regulation of programmed cell death"/>
    <property type="evidence" value="ECO:0000314"/>
    <property type="project" value="TAIR"/>
</dbReference>
<dbReference type="GO" id="GO:0006508">
    <property type="term" value="P:proteolysis"/>
    <property type="evidence" value="ECO:0007669"/>
    <property type="project" value="UniProtKB-KW"/>
</dbReference>
<dbReference type="FunFam" id="3.40.50.12660:FF:000001">
    <property type="entry name" value="Metacaspase-1"/>
    <property type="match status" value="1"/>
</dbReference>
<dbReference type="Gene3D" id="3.40.50.12660">
    <property type="match status" value="1"/>
</dbReference>
<dbReference type="InterPro" id="IPR029030">
    <property type="entry name" value="Caspase-like_dom_sf"/>
</dbReference>
<dbReference type="InterPro" id="IPR050452">
    <property type="entry name" value="Metacaspase"/>
</dbReference>
<dbReference type="InterPro" id="IPR011600">
    <property type="entry name" value="Pept_C14_caspase"/>
</dbReference>
<dbReference type="InterPro" id="IPR005735">
    <property type="entry name" value="Znf_LSD1"/>
</dbReference>
<dbReference type="NCBIfam" id="TIGR01053">
    <property type="entry name" value="LSD1"/>
    <property type="match status" value="1"/>
</dbReference>
<dbReference type="PANTHER" id="PTHR48104:SF30">
    <property type="entry name" value="METACASPASE-1"/>
    <property type="match status" value="1"/>
</dbReference>
<dbReference type="PANTHER" id="PTHR48104">
    <property type="entry name" value="METACASPASE-4"/>
    <property type="match status" value="1"/>
</dbReference>
<dbReference type="Pfam" id="PF00656">
    <property type="entry name" value="Peptidase_C14"/>
    <property type="match status" value="1"/>
</dbReference>
<dbReference type="Pfam" id="PF06943">
    <property type="entry name" value="zf-LSD1"/>
    <property type="match status" value="1"/>
</dbReference>
<dbReference type="SUPFAM" id="SSF52129">
    <property type="entry name" value="Caspase-like"/>
    <property type="match status" value="1"/>
</dbReference>
<gene>
    <name type="primary">AMC1</name>
    <name type="synonym">LOL3</name>
    <name type="synonym">MCP1B</name>
    <name type="ordered locus">At1g02170</name>
    <name type="ORF">T7I23.17</name>
</gene>
<name>MCA1_ARATH</name>
<proteinExistence type="evidence at protein level"/>
<reference key="1">
    <citation type="journal article" date="2004" name="J. Biol. Chem.">
        <title>Type II metacaspases Atmc4 and Atmc9 of Arabidopsis thaliana cleave substrates after arginine and lysine.</title>
        <authorList>
            <person name="Vercammen D."/>
            <person name="van de Cotte B."/>
            <person name="De Jaeger G."/>
            <person name="Eeckhout D."/>
            <person name="Casteels P."/>
            <person name="Vandepoele K."/>
            <person name="Vandenberghe I."/>
            <person name="van Beeumen J."/>
            <person name="Inze D."/>
            <person name="van Breusegem F."/>
        </authorList>
    </citation>
    <scope>NUCLEOTIDE SEQUENCE [MRNA]</scope>
    <scope>GENE FAMILY</scope>
    <scope>NOMENCLATURE</scope>
</reference>
<reference key="2">
    <citation type="submission" date="2003-06" db="EMBL/GenBank/DDBJ databases">
        <title>Characterization of metacaspases.</title>
        <authorList>
            <person name="Ikeda Y."/>
            <person name="Krishnamurthy N."/>
            <person name="Chua N.-H."/>
        </authorList>
    </citation>
    <scope>NUCLEOTIDE SEQUENCE [MRNA]</scope>
</reference>
<reference key="3">
    <citation type="journal article" date="2000" name="Nature">
        <title>Sequence and analysis of chromosome 1 of the plant Arabidopsis thaliana.</title>
        <authorList>
            <person name="Theologis A."/>
            <person name="Ecker J.R."/>
            <person name="Palm C.J."/>
            <person name="Federspiel N.A."/>
            <person name="Kaul S."/>
            <person name="White O."/>
            <person name="Alonso J."/>
            <person name="Altafi H."/>
            <person name="Araujo R."/>
            <person name="Bowman C.L."/>
            <person name="Brooks S.Y."/>
            <person name="Buehler E."/>
            <person name="Chan A."/>
            <person name="Chao Q."/>
            <person name="Chen H."/>
            <person name="Cheuk R.F."/>
            <person name="Chin C.W."/>
            <person name="Chung M.K."/>
            <person name="Conn L."/>
            <person name="Conway A.B."/>
            <person name="Conway A.R."/>
            <person name="Creasy T.H."/>
            <person name="Dewar K."/>
            <person name="Dunn P."/>
            <person name="Etgu P."/>
            <person name="Feldblyum T.V."/>
            <person name="Feng J.-D."/>
            <person name="Fong B."/>
            <person name="Fujii C.Y."/>
            <person name="Gill J.E."/>
            <person name="Goldsmith A.D."/>
            <person name="Haas B."/>
            <person name="Hansen N.F."/>
            <person name="Hughes B."/>
            <person name="Huizar L."/>
            <person name="Hunter J.L."/>
            <person name="Jenkins J."/>
            <person name="Johnson-Hopson C."/>
            <person name="Khan S."/>
            <person name="Khaykin E."/>
            <person name="Kim C.J."/>
            <person name="Koo H.L."/>
            <person name="Kremenetskaia I."/>
            <person name="Kurtz D.B."/>
            <person name="Kwan A."/>
            <person name="Lam B."/>
            <person name="Langin-Hooper S."/>
            <person name="Lee A."/>
            <person name="Lee J.M."/>
            <person name="Lenz C.A."/>
            <person name="Li J.H."/>
            <person name="Li Y.-P."/>
            <person name="Lin X."/>
            <person name="Liu S.X."/>
            <person name="Liu Z.A."/>
            <person name="Luros J.S."/>
            <person name="Maiti R."/>
            <person name="Marziali A."/>
            <person name="Militscher J."/>
            <person name="Miranda M."/>
            <person name="Nguyen M."/>
            <person name="Nierman W.C."/>
            <person name="Osborne B.I."/>
            <person name="Pai G."/>
            <person name="Peterson J."/>
            <person name="Pham P.K."/>
            <person name="Rizzo M."/>
            <person name="Rooney T."/>
            <person name="Rowley D."/>
            <person name="Sakano H."/>
            <person name="Salzberg S.L."/>
            <person name="Schwartz J.R."/>
            <person name="Shinn P."/>
            <person name="Southwick A.M."/>
            <person name="Sun H."/>
            <person name="Tallon L.J."/>
            <person name="Tambunga G."/>
            <person name="Toriumi M.J."/>
            <person name="Town C.D."/>
            <person name="Utterback T."/>
            <person name="Van Aken S."/>
            <person name="Vaysberg M."/>
            <person name="Vysotskaia V.S."/>
            <person name="Walker M."/>
            <person name="Wu D."/>
            <person name="Yu G."/>
            <person name="Fraser C.M."/>
            <person name="Venter J.C."/>
            <person name="Davis R.W."/>
        </authorList>
    </citation>
    <scope>NUCLEOTIDE SEQUENCE [LARGE SCALE GENOMIC DNA]</scope>
    <source>
        <strain>cv. Columbia</strain>
    </source>
</reference>
<reference key="4">
    <citation type="journal article" date="2017" name="Plant J.">
        <title>Araport11: a complete reannotation of the Arabidopsis thaliana reference genome.</title>
        <authorList>
            <person name="Cheng C.Y."/>
            <person name="Krishnakumar V."/>
            <person name="Chan A.P."/>
            <person name="Thibaud-Nissen F."/>
            <person name="Schobel S."/>
            <person name="Town C.D."/>
        </authorList>
    </citation>
    <scope>GENOME REANNOTATION</scope>
    <source>
        <strain>cv. Columbia</strain>
    </source>
</reference>
<reference key="5">
    <citation type="journal article" date="2004" name="Mol. Plant Pathol.">
        <title>Recent advance in the study of caspase-like proteases and Bax inhibitor-1 in plants: their possible roles as regulator of programmed cell death.</title>
        <authorList>
            <person name="Watanabe N."/>
            <person name="Lam E."/>
        </authorList>
    </citation>
    <scope>GENE FAMILY</scope>
</reference>
<reference key="6">
    <citation type="journal article" date="2005" name="J. Biol. Chem.">
        <title>Two Arabidopsis metacaspases AtMCP1b and AtMCP2b are arginine/lysine-specific cysteine proteases and activate apoptosis-like cell death in yeast.</title>
        <authorList>
            <person name="Watanabe N."/>
            <person name="Lam E."/>
        </authorList>
    </citation>
    <scope>FUNCTION</scope>
    <scope>AUTOCATALYTIC CLEAVAGE</scope>
    <scope>MUTAGENESIS OF CYS-220</scope>
</reference>
<reference key="7">
    <citation type="journal article" date="2010" name="Science">
        <title>Arabidopsis type I metacaspases control cell death.</title>
        <authorList>
            <person name="Coll N.S."/>
            <person name="Vercammen D."/>
            <person name="Smidler A."/>
            <person name="Clover C."/>
            <person name="Van Breusegem F."/>
            <person name="Dangl J.L."/>
            <person name="Epple P."/>
        </authorList>
    </citation>
    <scope>FUNCTION</scope>
    <scope>INTERACTION WITH LSD1</scope>
    <scope>DISRUPTION PHENOTYPE</scope>
    <scope>MUTAGENESIS OF CYS-220</scope>
</reference>
<keyword id="KW-0068">Autocatalytic cleavage</keyword>
<keyword id="KW-0378">Hydrolase</keyword>
<keyword id="KW-0611">Plant defense</keyword>
<keyword id="KW-0645">Protease</keyword>
<keyword id="KW-1185">Reference proteome</keyword>
<keyword id="KW-0788">Thiol protease</keyword>
<sequence length="367" mass="39792">MYPPPPSSIYAPPMLVNCSGCRTPLQLPSGARSIRCALCQAVTHIADPRTAPPPQPSSAPSPPPQIHAPPGQLPHPHGRKRAVICGISYRFSRHELKGCINDAKCMRHLLINKFKFSPDSILMLTEEETDPYRIPTKQNMRMALYWLVQGCTAGDSLVFHYSGHGSRQRNYNGDEVDGYDETLCPLDFETQGMIVDDEINATIVRPLPHGVKLHSIIDACHSGTVLDLPFLCRMNRAGQYVWEDHRPRSGLWKGTAGGEAISISGCDDDQTSADTSALSKITSTGAMTFCFIQAIERSAQGTTYGSLLNSMRTTIRNTGNDGGGSGGVVTTVLSMLLTGGSAIGGLRQEPQLTACQTFDVYAKPFTL</sequence>
<organism>
    <name type="scientific">Arabidopsis thaliana</name>
    <name type="common">Mouse-ear cress</name>
    <dbReference type="NCBI Taxonomy" id="3702"/>
    <lineage>
        <taxon>Eukaryota</taxon>
        <taxon>Viridiplantae</taxon>
        <taxon>Streptophyta</taxon>
        <taxon>Embryophyta</taxon>
        <taxon>Tracheophyta</taxon>
        <taxon>Spermatophyta</taxon>
        <taxon>Magnoliopsida</taxon>
        <taxon>eudicotyledons</taxon>
        <taxon>Gunneridae</taxon>
        <taxon>Pentapetalae</taxon>
        <taxon>rosids</taxon>
        <taxon>malvids</taxon>
        <taxon>Brassicales</taxon>
        <taxon>Brassicaceae</taxon>
        <taxon>Camelineae</taxon>
        <taxon>Arabidopsis</taxon>
    </lineage>
</organism>
<protein>
    <recommendedName>
        <fullName>Metacaspase-1</fullName>
        <shortName>AtMC1</shortName>
        <ecNumber>3.4.22.-</ecNumber>
    </recommendedName>
    <alternativeName>
        <fullName>Metacaspase 1b</fullName>
        <shortName>AtMCP1b</shortName>
    </alternativeName>
    <alternativeName>
        <fullName>Protein LSD ONE LIKE 3</fullName>
    </alternativeName>
</protein>